<organism>
    <name type="scientific">Flaveria anomala</name>
    <name type="common">Yellowtops</name>
    <dbReference type="NCBI Taxonomy" id="35877"/>
    <lineage>
        <taxon>Eukaryota</taxon>
        <taxon>Viridiplantae</taxon>
        <taxon>Streptophyta</taxon>
        <taxon>Embryophyta</taxon>
        <taxon>Tracheophyta</taxon>
        <taxon>Spermatophyta</taxon>
        <taxon>Magnoliopsida</taxon>
        <taxon>eudicotyledons</taxon>
        <taxon>Gunneridae</taxon>
        <taxon>Pentapetalae</taxon>
        <taxon>asterids</taxon>
        <taxon>campanulids</taxon>
        <taxon>Asterales</taxon>
        <taxon>Asteraceae</taxon>
        <taxon>Asteroideae</taxon>
        <taxon>Heliantheae alliance</taxon>
        <taxon>Tageteae</taxon>
        <taxon>Flaveria</taxon>
    </lineage>
</organism>
<protein>
    <recommendedName>
        <fullName>Glycine cleavage system H protein, mitochondrial</fullName>
    </recommendedName>
</protein>
<reference key="1">
    <citation type="journal article" date="1996" name="Plant J.">
        <title>H-protein of the glycine cleavage system in Flaveria: alternative splicing of the pre-mRNA occurs exclusively in advanced C4 species of the genus.</title>
        <authorList>
            <person name="Kopriva S."/>
            <person name="Chu C.-C."/>
            <person name="Bauwe H."/>
        </authorList>
    </citation>
    <scope>NUCLEOTIDE SEQUENCE</scope>
    <source>
        <tissue>Leaf</tissue>
    </source>
</reference>
<reference key="2">
    <citation type="online journal article" date="1998" name="Plant Gene Register">
        <title>The GDCSH gene encoding H-protein of the glycine cleavage system in the C3-C4 intermediate plant Flaveria anomala.</title>
        <authorList>
            <person name="Chu C.-C."/>
            <person name="Qu N."/>
            <person name="Bauwe H."/>
        </authorList>
        <locator>PGR98-001</locator>
    </citation>
    <scope>NUCLEOTIDE SEQUENCE [GENOMIC DNA]</scope>
    <source>
        <tissue>Leaf</tissue>
    </source>
</reference>
<feature type="transit peptide" description="Mitochondrion" evidence="1">
    <location>
        <begin position="1"/>
        <end position="31"/>
    </location>
</feature>
<feature type="chain" id="PRO_0000010731" description="Glycine cleavage system H protein, mitochondrial">
    <location>
        <begin position="32"/>
        <end position="162"/>
    </location>
</feature>
<feature type="domain" description="Lipoyl-binding" evidence="2">
    <location>
        <begin position="53"/>
        <end position="135"/>
    </location>
</feature>
<feature type="modified residue" description="N6-lipoyllysine" evidence="1 2">
    <location>
        <position position="94"/>
    </location>
</feature>
<feature type="sequence conflict" description="In Ref. 2; CAB16710." evidence="3" ref="2">
    <original>M</original>
    <variation>I</variation>
    <location>
        <position position="5"/>
    </location>
</feature>
<keyword id="KW-0450">Lipoyl</keyword>
<keyword id="KW-0496">Mitochondrion</keyword>
<keyword id="KW-0809">Transit peptide</keyword>
<proteinExistence type="evidence at transcript level"/>
<dbReference type="EMBL" id="Z37524">
    <property type="protein sequence ID" value="CAA85761.1"/>
    <property type="molecule type" value="mRNA"/>
</dbReference>
<dbReference type="EMBL" id="Z99530">
    <property type="protein sequence ID" value="CAB16710.1"/>
    <property type="molecule type" value="Genomic_DNA"/>
</dbReference>
<dbReference type="PIR" id="S49248">
    <property type="entry name" value="S49248"/>
</dbReference>
<dbReference type="SMR" id="Q39732"/>
<dbReference type="GO" id="GO:0005960">
    <property type="term" value="C:glycine cleavage complex"/>
    <property type="evidence" value="ECO:0007669"/>
    <property type="project" value="InterPro"/>
</dbReference>
<dbReference type="GO" id="GO:0005739">
    <property type="term" value="C:mitochondrion"/>
    <property type="evidence" value="ECO:0007669"/>
    <property type="project" value="UniProtKB-SubCell"/>
</dbReference>
<dbReference type="GO" id="GO:0019464">
    <property type="term" value="P:glycine decarboxylation via glycine cleavage system"/>
    <property type="evidence" value="ECO:0007669"/>
    <property type="project" value="InterPro"/>
</dbReference>
<dbReference type="CDD" id="cd06848">
    <property type="entry name" value="GCS_H"/>
    <property type="match status" value="1"/>
</dbReference>
<dbReference type="FunFam" id="2.40.50.100:FF:000011">
    <property type="entry name" value="Glycine cleavage system H protein"/>
    <property type="match status" value="1"/>
</dbReference>
<dbReference type="Gene3D" id="2.40.50.100">
    <property type="match status" value="1"/>
</dbReference>
<dbReference type="HAMAP" id="MF_00272">
    <property type="entry name" value="GcvH"/>
    <property type="match status" value="1"/>
</dbReference>
<dbReference type="InterPro" id="IPR003016">
    <property type="entry name" value="2-oxoA_DH_lipoyl-BS"/>
</dbReference>
<dbReference type="InterPro" id="IPR000089">
    <property type="entry name" value="Biotin_lipoyl"/>
</dbReference>
<dbReference type="InterPro" id="IPR002930">
    <property type="entry name" value="GCV_H"/>
</dbReference>
<dbReference type="InterPro" id="IPR033753">
    <property type="entry name" value="GCV_H/Fam206"/>
</dbReference>
<dbReference type="InterPro" id="IPR017453">
    <property type="entry name" value="GCV_H_sub"/>
</dbReference>
<dbReference type="InterPro" id="IPR011053">
    <property type="entry name" value="Single_hybrid_motif"/>
</dbReference>
<dbReference type="NCBIfam" id="TIGR00527">
    <property type="entry name" value="gcvH"/>
    <property type="match status" value="1"/>
</dbReference>
<dbReference type="NCBIfam" id="NF002270">
    <property type="entry name" value="PRK01202.1"/>
    <property type="match status" value="1"/>
</dbReference>
<dbReference type="PANTHER" id="PTHR11715">
    <property type="entry name" value="GLYCINE CLEAVAGE SYSTEM H PROTEIN"/>
    <property type="match status" value="1"/>
</dbReference>
<dbReference type="PANTHER" id="PTHR11715:SF27">
    <property type="entry name" value="GLYCINE CLEAVAGE SYSTEM H PROTEIN 1, MITOCHONDRIAL-RELATED"/>
    <property type="match status" value="1"/>
</dbReference>
<dbReference type="Pfam" id="PF01597">
    <property type="entry name" value="GCV_H"/>
    <property type="match status" value="1"/>
</dbReference>
<dbReference type="SUPFAM" id="SSF51230">
    <property type="entry name" value="Single hybrid motif"/>
    <property type="match status" value="1"/>
</dbReference>
<dbReference type="PROSITE" id="PS50968">
    <property type="entry name" value="BIOTINYL_LIPOYL"/>
    <property type="match status" value="1"/>
</dbReference>
<dbReference type="PROSITE" id="PS00189">
    <property type="entry name" value="LIPOYL"/>
    <property type="match status" value="1"/>
</dbReference>
<comment type="function">
    <text>The glycine cleavage system catalyzes the degradation of glycine. The H protein shuttles the methylamine group of glycine from the P protein to the T protein.</text>
</comment>
<comment type="cofactor">
    <cofactor>
        <name>(R)-lipoate</name>
        <dbReference type="ChEBI" id="CHEBI:83088"/>
    </cofactor>
    <text>Binds 1 lipoyl cofactor covalently.</text>
</comment>
<comment type="subunit">
    <text>The glycine cleavage system is composed of four proteins: P, T, L and H.</text>
</comment>
<comment type="subcellular location">
    <subcellularLocation>
        <location>Mitochondrion</location>
    </subcellularLocation>
</comment>
<comment type="similarity">
    <text evidence="3">Belongs to the GcvH family.</text>
</comment>
<evidence type="ECO:0000250" key="1"/>
<evidence type="ECO:0000255" key="2">
    <source>
        <dbReference type="PROSITE-ProRule" id="PRU01066"/>
    </source>
</evidence>
<evidence type="ECO:0000305" key="3"/>
<sequence length="162" mass="17354">MALRMWASSTANALRLSSATRPHFSPLSRCFSSVLDGLKYANSHEWVKHEGSVATIGITDHAQDHLGEVVFVDLPEAGGSVTKATGFGAVESVKATSDVNSPISGEIVEVNSKLSETPGLINSSPYEDGWMIKVKPSNPSELDSLMGAKEYTKFCEEEDAAH</sequence>
<gene>
    <name type="primary">GDCSH</name>
    <name type="synonym">GCDH</name>
    <name type="synonym">GCSH</name>
</gene>
<name>GCSH_FLAAN</name>
<accession>Q39732</accession>
<accession>O49848</accession>